<evidence type="ECO:0000255" key="1">
    <source>
        <dbReference type="HAMAP-Rule" id="MF_00201"/>
    </source>
</evidence>
<reference key="1">
    <citation type="submission" date="2006-03" db="EMBL/GenBank/DDBJ databases">
        <title>Complete sequence of Rhodopseudomonas palustris BisB5.</title>
        <authorList>
            <consortium name="US DOE Joint Genome Institute"/>
            <person name="Copeland A."/>
            <person name="Lucas S."/>
            <person name="Lapidus A."/>
            <person name="Barry K."/>
            <person name="Detter J.C."/>
            <person name="Glavina del Rio T."/>
            <person name="Hammon N."/>
            <person name="Israni S."/>
            <person name="Dalin E."/>
            <person name="Tice H."/>
            <person name="Pitluck S."/>
            <person name="Chain P."/>
            <person name="Malfatti S."/>
            <person name="Shin M."/>
            <person name="Vergez L."/>
            <person name="Schmutz J."/>
            <person name="Larimer F."/>
            <person name="Land M."/>
            <person name="Hauser L."/>
            <person name="Pelletier D.A."/>
            <person name="Kyrpides N."/>
            <person name="Lykidis A."/>
            <person name="Oda Y."/>
            <person name="Harwood C.S."/>
            <person name="Richardson P."/>
        </authorList>
    </citation>
    <scope>NUCLEOTIDE SEQUENCE [LARGE SCALE GENOMIC DNA]</scope>
    <source>
        <strain>BisB5</strain>
    </source>
</reference>
<comment type="function">
    <text evidence="1">Involved in DNA repair and RecF pathway recombination.</text>
</comment>
<comment type="similarity">
    <text evidence="1">Belongs to the RecO family.</text>
</comment>
<proteinExistence type="inferred from homology"/>
<sequence>MEWSDEGIILGVRRHGEAGAIVELLTRSHGRHLGLVRGGASSRMRPLLQPGNSVLAVWRARLDEHLGYYQLEGTRMRAATMLASSHAVYGVTHLASLARLLPERDPHEDIYEMLERTLDDFDDVGDAATHLIRFELAMLAELGFGLDLSACAATGATVELIYVSPKSGSAVSRAAGEPWRDKLLRLPAFLRDDNDGRNGWSDQDLRDGFDLTGRFLLRNVLEPRGQGHSDARDGFINAVTRHLARTAIP</sequence>
<name>RECO_RHOPS</name>
<keyword id="KW-0227">DNA damage</keyword>
<keyword id="KW-0233">DNA recombination</keyword>
<keyword id="KW-0234">DNA repair</keyword>
<feature type="chain" id="PRO_0000264838" description="DNA repair protein RecO">
    <location>
        <begin position="1"/>
        <end position="249"/>
    </location>
</feature>
<gene>
    <name evidence="1" type="primary">recO</name>
    <name type="ordered locus">RPD_2654</name>
</gene>
<organism>
    <name type="scientific">Rhodopseudomonas palustris (strain BisB5)</name>
    <dbReference type="NCBI Taxonomy" id="316057"/>
    <lineage>
        <taxon>Bacteria</taxon>
        <taxon>Pseudomonadati</taxon>
        <taxon>Pseudomonadota</taxon>
        <taxon>Alphaproteobacteria</taxon>
        <taxon>Hyphomicrobiales</taxon>
        <taxon>Nitrobacteraceae</taxon>
        <taxon>Rhodopseudomonas</taxon>
    </lineage>
</organism>
<dbReference type="EMBL" id="CP000283">
    <property type="protein sequence ID" value="ABE39883.1"/>
    <property type="molecule type" value="Genomic_DNA"/>
</dbReference>
<dbReference type="SMR" id="Q136V6"/>
<dbReference type="STRING" id="316057.RPD_2654"/>
<dbReference type="KEGG" id="rpd:RPD_2654"/>
<dbReference type="eggNOG" id="COG1381">
    <property type="taxonomic scope" value="Bacteria"/>
</dbReference>
<dbReference type="HOGENOM" id="CLU_086029_0_0_5"/>
<dbReference type="BioCyc" id="RPAL316057:RPD_RS13350-MONOMER"/>
<dbReference type="Proteomes" id="UP000001818">
    <property type="component" value="Chromosome"/>
</dbReference>
<dbReference type="GO" id="GO:0043590">
    <property type="term" value="C:bacterial nucleoid"/>
    <property type="evidence" value="ECO:0007669"/>
    <property type="project" value="TreeGrafter"/>
</dbReference>
<dbReference type="GO" id="GO:0006310">
    <property type="term" value="P:DNA recombination"/>
    <property type="evidence" value="ECO:0007669"/>
    <property type="project" value="UniProtKB-UniRule"/>
</dbReference>
<dbReference type="GO" id="GO:0006302">
    <property type="term" value="P:double-strand break repair"/>
    <property type="evidence" value="ECO:0007669"/>
    <property type="project" value="TreeGrafter"/>
</dbReference>
<dbReference type="Gene3D" id="2.40.50.140">
    <property type="entry name" value="Nucleic acid-binding proteins"/>
    <property type="match status" value="1"/>
</dbReference>
<dbReference type="Gene3D" id="1.20.1440.120">
    <property type="entry name" value="Recombination protein O, C-terminal domain"/>
    <property type="match status" value="1"/>
</dbReference>
<dbReference type="HAMAP" id="MF_00201">
    <property type="entry name" value="RecO"/>
    <property type="match status" value="1"/>
</dbReference>
<dbReference type="InterPro" id="IPR037278">
    <property type="entry name" value="ARFGAP/RecO"/>
</dbReference>
<dbReference type="InterPro" id="IPR022572">
    <property type="entry name" value="DNA_rep/recomb_RecO_N"/>
</dbReference>
<dbReference type="InterPro" id="IPR012340">
    <property type="entry name" value="NA-bd_OB-fold"/>
</dbReference>
<dbReference type="InterPro" id="IPR003717">
    <property type="entry name" value="RecO"/>
</dbReference>
<dbReference type="InterPro" id="IPR042242">
    <property type="entry name" value="RecO_C"/>
</dbReference>
<dbReference type="NCBIfam" id="TIGR00613">
    <property type="entry name" value="reco"/>
    <property type="match status" value="1"/>
</dbReference>
<dbReference type="PANTHER" id="PTHR33991">
    <property type="entry name" value="DNA REPAIR PROTEIN RECO"/>
    <property type="match status" value="1"/>
</dbReference>
<dbReference type="PANTHER" id="PTHR33991:SF1">
    <property type="entry name" value="DNA REPAIR PROTEIN RECO"/>
    <property type="match status" value="1"/>
</dbReference>
<dbReference type="Pfam" id="PF02565">
    <property type="entry name" value="RecO_C"/>
    <property type="match status" value="1"/>
</dbReference>
<dbReference type="Pfam" id="PF11967">
    <property type="entry name" value="RecO_N"/>
    <property type="match status" value="1"/>
</dbReference>
<dbReference type="SUPFAM" id="SSF57863">
    <property type="entry name" value="ArfGap/RecO-like zinc finger"/>
    <property type="match status" value="1"/>
</dbReference>
<dbReference type="SUPFAM" id="SSF50249">
    <property type="entry name" value="Nucleic acid-binding proteins"/>
    <property type="match status" value="1"/>
</dbReference>
<accession>Q136V6</accession>
<protein>
    <recommendedName>
        <fullName evidence="1">DNA repair protein RecO</fullName>
    </recommendedName>
    <alternativeName>
        <fullName evidence="1">Recombination protein O</fullName>
    </alternativeName>
</protein>